<proteinExistence type="inferred from homology"/>
<gene>
    <name evidence="1" type="primary">rpsS</name>
    <name type="ordered locus">DR_0315</name>
</gene>
<name>RS19_DEIRA</name>
<protein>
    <recommendedName>
        <fullName evidence="1">Small ribosomal subunit protein uS19</fullName>
    </recommendedName>
    <alternativeName>
        <fullName evidence="3">30S ribosomal protein S19</fullName>
    </alternativeName>
</protein>
<keyword id="KW-1185">Reference proteome</keyword>
<keyword id="KW-0687">Ribonucleoprotein</keyword>
<keyword id="KW-0689">Ribosomal protein</keyword>
<keyword id="KW-0694">RNA-binding</keyword>
<keyword id="KW-0699">rRNA-binding</keyword>
<reference key="1">
    <citation type="journal article" date="1999" name="Science">
        <title>Genome sequence of the radioresistant bacterium Deinococcus radiodurans R1.</title>
        <authorList>
            <person name="White O."/>
            <person name="Eisen J.A."/>
            <person name="Heidelberg J.F."/>
            <person name="Hickey E.K."/>
            <person name="Peterson J.D."/>
            <person name="Dodson R.J."/>
            <person name="Haft D.H."/>
            <person name="Gwinn M.L."/>
            <person name="Nelson W.C."/>
            <person name="Richardson D.L."/>
            <person name="Moffat K.S."/>
            <person name="Qin H."/>
            <person name="Jiang L."/>
            <person name="Pamphile W."/>
            <person name="Crosby M."/>
            <person name="Shen M."/>
            <person name="Vamathevan J.J."/>
            <person name="Lam P."/>
            <person name="McDonald L.A."/>
            <person name="Utterback T.R."/>
            <person name="Zalewski C."/>
            <person name="Makarova K.S."/>
            <person name="Aravind L."/>
            <person name="Daly M.J."/>
            <person name="Minton K.W."/>
            <person name="Fleischmann R.D."/>
            <person name="Ketchum K.A."/>
            <person name="Nelson K.E."/>
            <person name="Salzberg S.L."/>
            <person name="Smith H.O."/>
            <person name="Venter J.C."/>
            <person name="Fraser C.M."/>
        </authorList>
    </citation>
    <scope>NUCLEOTIDE SEQUENCE [LARGE SCALE GENOMIC DNA]</scope>
    <source>
        <strain>ATCC 13939 / DSM 20539 / JCM 16871 / CCUG 27074 / LMG 4051 / NBRC 15346 / NCIMB 9279 / VKM B-1422 / R1</strain>
    </source>
</reference>
<dbReference type="EMBL" id="AE000513">
    <property type="protein sequence ID" value="AAF09896.1"/>
    <property type="molecule type" value="Genomic_DNA"/>
</dbReference>
<dbReference type="PIR" id="C75534">
    <property type="entry name" value="C75534"/>
</dbReference>
<dbReference type="RefSeq" id="NP_294038.1">
    <property type="nucleotide sequence ID" value="NC_001263.1"/>
</dbReference>
<dbReference type="RefSeq" id="WP_010886960.1">
    <property type="nucleotide sequence ID" value="NC_001263.1"/>
</dbReference>
<dbReference type="SMR" id="Q9RXJ8"/>
<dbReference type="DIP" id="DIP-58601N"/>
<dbReference type="FunCoup" id="Q9RXJ8">
    <property type="interactions" value="433"/>
</dbReference>
<dbReference type="IntAct" id="Q9RXJ8">
    <property type="interactions" value="1"/>
</dbReference>
<dbReference type="STRING" id="243230.DR_0315"/>
<dbReference type="PaxDb" id="243230-DR_0315"/>
<dbReference type="EnsemblBacteria" id="AAF09896">
    <property type="protein sequence ID" value="AAF09896"/>
    <property type="gene ID" value="DR_0315"/>
</dbReference>
<dbReference type="GeneID" id="69516547"/>
<dbReference type="KEGG" id="dra:DR_0315"/>
<dbReference type="PATRIC" id="fig|243230.17.peg.481"/>
<dbReference type="eggNOG" id="COG0185">
    <property type="taxonomic scope" value="Bacteria"/>
</dbReference>
<dbReference type="HOGENOM" id="CLU_144911_0_1_0"/>
<dbReference type="InParanoid" id="Q9RXJ8"/>
<dbReference type="OrthoDB" id="9797833at2"/>
<dbReference type="Proteomes" id="UP000002524">
    <property type="component" value="Chromosome 1"/>
</dbReference>
<dbReference type="GO" id="GO:0005737">
    <property type="term" value="C:cytoplasm"/>
    <property type="evidence" value="ECO:0007669"/>
    <property type="project" value="UniProtKB-ARBA"/>
</dbReference>
<dbReference type="GO" id="GO:0015935">
    <property type="term" value="C:small ribosomal subunit"/>
    <property type="evidence" value="ECO:0007669"/>
    <property type="project" value="InterPro"/>
</dbReference>
<dbReference type="GO" id="GO:0019843">
    <property type="term" value="F:rRNA binding"/>
    <property type="evidence" value="ECO:0007669"/>
    <property type="project" value="UniProtKB-UniRule"/>
</dbReference>
<dbReference type="GO" id="GO:0003735">
    <property type="term" value="F:structural constituent of ribosome"/>
    <property type="evidence" value="ECO:0000318"/>
    <property type="project" value="GO_Central"/>
</dbReference>
<dbReference type="GO" id="GO:0000028">
    <property type="term" value="P:ribosomal small subunit assembly"/>
    <property type="evidence" value="ECO:0000318"/>
    <property type="project" value="GO_Central"/>
</dbReference>
<dbReference type="GO" id="GO:0006412">
    <property type="term" value="P:translation"/>
    <property type="evidence" value="ECO:0007669"/>
    <property type="project" value="UniProtKB-UniRule"/>
</dbReference>
<dbReference type="FunFam" id="3.30.860.10:FF:000001">
    <property type="entry name" value="30S ribosomal protein S19"/>
    <property type="match status" value="1"/>
</dbReference>
<dbReference type="Gene3D" id="3.30.860.10">
    <property type="entry name" value="30s Ribosomal Protein S19, Chain A"/>
    <property type="match status" value="1"/>
</dbReference>
<dbReference type="HAMAP" id="MF_00531">
    <property type="entry name" value="Ribosomal_uS19"/>
    <property type="match status" value="1"/>
</dbReference>
<dbReference type="InterPro" id="IPR002222">
    <property type="entry name" value="Ribosomal_uS19"/>
</dbReference>
<dbReference type="InterPro" id="IPR005732">
    <property type="entry name" value="Ribosomal_uS19_bac-type"/>
</dbReference>
<dbReference type="InterPro" id="IPR020934">
    <property type="entry name" value="Ribosomal_uS19_CS"/>
</dbReference>
<dbReference type="InterPro" id="IPR023575">
    <property type="entry name" value="Ribosomal_uS19_SF"/>
</dbReference>
<dbReference type="NCBIfam" id="TIGR01050">
    <property type="entry name" value="rpsS_bact"/>
    <property type="match status" value="1"/>
</dbReference>
<dbReference type="PANTHER" id="PTHR11880">
    <property type="entry name" value="RIBOSOMAL PROTEIN S19P FAMILY MEMBER"/>
    <property type="match status" value="1"/>
</dbReference>
<dbReference type="PANTHER" id="PTHR11880:SF8">
    <property type="entry name" value="SMALL RIBOSOMAL SUBUNIT PROTEIN US19M"/>
    <property type="match status" value="1"/>
</dbReference>
<dbReference type="Pfam" id="PF00203">
    <property type="entry name" value="Ribosomal_S19"/>
    <property type="match status" value="1"/>
</dbReference>
<dbReference type="PIRSF" id="PIRSF002144">
    <property type="entry name" value="Ribosomal_S19"/>
    <property type="match status" value="1"/>
</dbReference>
<dbReference type="PRINTS" id="PR00975">
    <property type="entry name" value="RIBOSOMALS19"/>
</dbReference>
<dbReference type="SUPFAM" id="SSF54570">
    <property type="entry name" value="Ribosomal protein S19"/>
    <property type="match status" value="1"/>
</dbReference>
<dbReference type="PROSITE" id="PS00323">
    <property type="entry name" value="RIBOSOMAL_S19"/>
    <property type="match status" value="1"/>
</dbReference>
<sequence length="95" mass="10823">MPRSLKKGPFVEDHLLKKVDAQNDKKDKRVIKTWSRRSTIVPEMIGHTIAVYNGKQHVPVFVNEQMIGHKLGEFSPTRTYRGHGADKNAKGSKKK</sequence>
<evidence type="ECO:0000255" key="1">
    <source>
        <dbReference type="HAMAP-Rule" id="MF_00531"/>
    </source>
</evidence>
<evidence type="ECO:0000256" key="2">
    <source>
        <dbReference type="SAM" id="MobiDB-lite"/>
    </source>
</evidence>
<evidence type="ECO:0000305" key="3"/>
<feature type="chain" id="PRO_0000129816" description="Small ribosomal subunit protein uS19">
    <location>
        <begin position="1"/>
        <end position="95"/>
    </location>
</feature>
<feature type="region of interest" description="Disordered" evidence="2">
    <location>
        <begin position="73"/>
        <end position="95"/>
    </location>
</feature>
<organism>
    <name type="scientific">Deinococcus radiodurans (strain ATCC 13939 / DSM 20539 / JCM 16871 / CCUG 27074 / LMG 4051 / NBRC 15346 / NCIMB 9279 / VKM B-1422 / R1)</name>
    <dbReference type="NCBI Taxonomy" id="243230"/>
    <lineage>
        <taxon>Bacteria</taxon>
        <taxon>Thermotogati</taxon>
        <taxon>Deinococcota</taxon>
        <taxon>Deinococci</taxon>
        <taxon>Deinococcales</taxon>
        <taxon>Deinococcaceae</taxon>
        <taxon>Deinococcus</taxon>
    </lineage>
</organism>
<accession>Q9RXJ8</accession>
<comment type="function">
    <text evidence="1">Protein S19 forms a complex with S13 that binds strongly to the 16S ribosomal RNA.</text>
</comment>
<comment type="similarity">
    <text evidence="1">Belongs to the universal ribosomal protein uS19 family.</text>
</comment>